<sequence length="512" mass="56631">MFAKATRNFLKEVDAGGDLISVSHLNDSDKLQLLSLVTKKKRYWCWQRPKYQILSATLEDVLTEGHCLSPVVVESDFVKYESKCENHKSGAIGTVVGKVKLNVGGKGVVESHSSFGTLRKQEVDVQQLIQDAVKRTVNMDNLVLQQVLESRNEVLCVLTQKIMTTQKCVISEHVQSEETCGGMVGIQTKTIQVSATEDGTVTTDTNVVLEIPAATTIAYGIMELFVKQDGQFEFCLLQGKHGGFEHERKLDSVYLDPLAYREFAFLDMLDGGQGISSQDGPLRVVKQATLHLERSFHPFAVLPAQQQRALFCVLQKILFDEELLRALEQVCDDVAGGLWSSQAVLAMEELTDSQQQDLTAFLQLVGYRIQGEHPGPQDEVSNQKLFATAYFLVSALAEMPDNATVFLGTCCKLHVISSLCCLLHALSDDSVCDFHNPTLAPLRDTERFGIVQRLFASADIALERMQFSAKATILKDSCIFPLILHITLSGLSTLSKEHEEELCQSGHATGQD</sequence>
<gene>
    <name evidence="1" type="primary">Gsdme</name>
    <name type="synonym">Dfna5</name>
    <name type="synonym">Dfna5h</name>
</gene>
<protein>
    <recommendedName>
        <fullName evidence="1">Gasdermin-E</fullName>
    </recommendedName>
    <alternativeName>
        <fullName evidence="7">Non-syndromic hearing impairment protein 5 homolog</fullName>
    </alternativeName>
    <component>
        <recommendedName>
            <fullName evidence="1">Gasdermin-E, N-terminal</fullName>
            <shortName evidence="1">GSDME-NT</shortName>
        </recommendedName>
    </component>
    <component>
        <recommendedName>
            <fullName evidence="1">Gasdermin-E, C-terminal</fullName>
            <shortName evidence="1">GSDME-CT</shortName>
        </recommendedName>
    </component>
</protein>
<comment type="function">
    <molecule>Gasdermin-E</molecule>
    <text evidence="5 6">Precursor of a pore-forming protein that converts non-inflammatory apoptosis to pyroptosis. This form constitutes the precursor of the pore-forming protein: upon cleavage, the released N-terminal moiety (Gasdermin-E, N-terminal) binds to membranes and forms pores, triggering pyroptosis.</text>
</comment>
<comment type="function">
    <molecule>Gasdermin-E, N-terminal</molecule>
    <text evidence="1 3 5 6">Pore-forming protein produced by cleavage by CASP3 or granzyme B (GZMB), which converts non-inflammatory apoptosis to pyroptosis or promotes granzyme-mediated pyroptosis, respectively (PubMed:32188940). After cleavage, moves to the plasma membrane, homooligomerizes within the membrane and forms pores of 10-15 nanometers (nm) of inner diameter, allowing the release of mature interleukins (IL1B and IL16) and triggering pyroptosis (PubMed:33852854). Binds to inner leaflet lipids, bisphosphorylated phosphatidylinositols, such as phosphatidylinositol (4,5)-bisphosphate (By similarity). Cleavage by CASP3 switches CASP3-mediated apoptosis induced by TNF or danger signals, such as chemotherapy drugs, to pyroptosis (PubMed:32188940). Mediates secondary necrosis downstream of the mitochondrial apoptotic pathway and CASP3 activation as well as in response to viral agents (PubMed:28045099). Exhibits bactericidal activity (By similarity). Cleavage by GZMB promotes tumor suppressor activity by triggering robust anti-tumor immunity (PubMed:32188940). Suppresses tumors by mediating granzyme-mediated pyroptosis in target cells of natural killer (NK) cells: cleavage by granzyme B (GZMB), delivered to target cells from NK-cells, triggers pyroptosis of tumor cells and tumor suppression (By similarity). May play a role in the p53/TP53-regulated cellular response to DNA damage (By similarity).</text>
</comment>
<comment type="activity regulation">
    <molecule>Gasdermin-E</molecule>
    <text evidence="1 6">The full-length protein before cleavage is inactive: intramolecular interactions between N- and C-terminal domains mediate autoinhibition in the absence of activation signal (By similarity). The intrinsic pyroptosis-inducing activity is carried by the released N-terminal moiety (Gasdermin-E, N-terminal) following cleavage by CASP3 or granzyme B (GZMB) (By similarity). Activated by NLRP1 in the absence of GSDMD expression: NLRP1 cleaves and activates CASP8, promoting downstream activation of CASP3 and subsequent activation of GSDME (PubMed:33852854).</text>
</comment>
<comment type="subunit">
    <molecule>Gasdermin-E, N-terminal</molecule>
    <text evidence="2">Homooligomer; homooligomeric ring-shaped pore complex containing 27-28 subunits when inserted in the membrane.</text>
</comment>
<comment type="subcellular location">
    <molecule>Gasdermin-E, N-terminal</molecule>
    <subcellularLocation>
        <location evidence="1">Cell membrane</location>
        <topology evidence="2">Multi-pass membrane protein</topology>
    </subcellularLocation>
</comment>
<comment type="subcellular location">
    <molecule>Gasdermin-E</molecule>
    <subcellularLocation>
        <location evidence="1">Cytoplasm</location>
        <location evidence="1">Cytosol</location>
    </subcellularLocation>
</comment>
<comment type="tissue specificity">
    <text evidence="3 4">Expressed in spleen, kidney, large and small intestine, testicle, stomach and by CD4(+)CD(8+) T cells in thymus (PubMed:28459430). Expressed by macrophages (PubMed:28045099).</text>
</comment>
<comment type="domain">
    <text evidence="1">Intramolecular interactions between N- and C-terminal domains may be important for autoinhibition in the absence of activation signal. The intrinsic pyroptosis-inducing activity is carried by the N-terminal domain, that is released upon cleavage by CASP3 or granzyme B (GZMB).</text>
</comment>
<comment type="PTM">
    <text evidence="1">Cleavage at Asp-270 by CASP3 (mature and uncleaved precursor forms) or granzyme B (GZMB) relieves autoinhibition and is sufficient to initiate pyroptosis.</text>
</comment>
<comment type="PTM">
    <molecule>Gasdermin-E</molecule>
    <text evidence="1">Succination by the Krebs cycle intermediate fumarate, which leads to S-(2-succinyl)cysteine residues, inhibits processing by caspases, and ability to initiate pyroptosis. Succination modification is catalyzed by a non-enzymatic reaction caused by an accumulation of fumarate.</text>
</comment>
<comment type="PTM">
    <molecule>Gasdermin-E</molecule>
    <text evidence="1">Ubiquitinated on Lys-120 and Lys-189 via 'Lys-48'-linked polyubiquitin chains, leading to proteasomal degradation. Deubiquitinated by USP48, leading to increased stability.</text>
</comment>
<comment type="PTM">
    <text evidence="1">Palmitoylated.</text>
</comment>
<comment type="disruption phenotype">
    <text evidence="4">Mutant mice develop normally, including the immune system. After injection of the chemotherapy drug cisplatin, they look more healthy and vigorous than wild type.</text>
</comment>
<comment type="similarity">
    <text evidence="7">Belongs to the gasdermin family.</text>
</comment>
<evidence type="ECO:0000250" key="1">
    <source>
        <dbReference type="UniProtKB" id="O60443"/>
    </source>
</evidence>
<evidence type="ECO:0000250" key="2">
    <source>
        <dbReference type="UniProtKB" id="Q5Y4Y6"/>
    </source>
</evidence>
<evidence type="ECO:0000269" key="3">
    <source>
    </source>
</evidence>
<evidence type="ECO:0000269" key="4">
    <source>
    </source>
</evidence>
<evidence type="ECO:0000269" key="5">
    <source>
    </source>
</evidence>
<evidence type="ECO:0000269" key="6">
    <source>
    </source>
</evidence>
<evidence type="ECO:0000305" key="7"/>
<keyword id="KW-1003">Cell membrane</keyword>
<keyword id="KW-0963">Cytoplasm</keyword>
<keyword id="KW-1017">Isopeptide bond</keyword>
<keyword id="KW-0449">Lipoprotein</keyword>
<keyword id="KW-0472">Membrane</keyword>
<keyword id="KW-1210">Necrosis</keyword>
<keyword id="KW-0564">Palmitate</keyword>
<keyword id="KW-1185">Reference proteome</keyword>
<keyword id="KW-0812">Transmembrane</keyword>
<keyword id="KW-1134">Transmembrane beta strand</keyword>
<keyword id="KW-0832">Ubl conjugation</keyword>
<reference key="1">
    <citation type="journal article" date="1998" name="Nat. Genet.">
        <title>Nonsyndromic hearing impairment is associated with a mutation in DFNA5.</title>
        <authorList>
            <person name="Van Laer L."/>
            <person name="Huizing E.H."/>
            <person name="Verstreken M."/>
            <person name="van Zuijlen D."/>
            <person name="Wauters J.G."/>
            <person name="Bossuyt P.J."/>
            <person name="Van de Heyning P."/>
            <person name="McGuirt W.T."/>
            <person name="Smith R.J.H."/>
            <person name="Willems P.J."/>
            <person name="Legan P.K."/>
            <person name="Richardson G.P."/>
            <person name="Van Camp G."/>
        </authorList>
    </citation>
    <scope>NUCLEOTIDE SEQUENCE [MRNA]</scope>
    <source>
        <tissue>Cochlea</tissue>
    </source>
</reference>
<reference key="2">
    <citation type="journal article" date="2005" name="Science">
        <title>The transcriptional landscape of the mammalian genome.</title>
        <authorList>
            <person name="Carninci P."/>
            <person name="Kasukawa T."/>
            <person name="Katayama S."/>
            <person name="Gough J."/>
            <person name="Frith M.C."/>
            <person name="Maeda N."/>
            <person name="Oyama R."/>
            <person name="Ravasi T."/>
            <person name="Lenhard B."/>
            <person name="Wells C."/>
            <person name="Kodzius R."/>
            <person name="Shimokawa K."/>
            <person name="Bajic V.B."/>
            <person name="Brenner S.E."/>
            <person name="Batalov S."/>
            <person name="Forrest A.R."/>
            <person name="Zavolan M."/>
            <person name="Davis M.J."/>
            <person name="Wilming L.G."/>
            <person name="Aidinis V."/>
            <person name="Allen J.E."/>
            <person name="Ambesi-Impiombato A."/>
            <person name="Apweiler R."/>
            <person name="Aturaliya R.N."/>
            <person name="Bailey T.L."/>
            <person name="Bansal M."/>
            <person name="Baxter L."/>
            <person name="Beisel K.W."/>
            <person name="Bersano T."/>
            <person name="Bono H."/>
            <person name="Chalk A.M."/>
            <person name="Chiu K.P."/>
            <person name="Choudhary V."/>
            <person name="Christoffels A."/>
            <person name="Clutterbuck D.R."/>
            <person name="Crowe M.L."/>
            <person name="Dalla E."/>
            <person name="Dalrymple B.P."/>
            <person name="de Bono B."/>
            <person name="Della Gatta G."/>
            <person name="di Bernardo D."/>
            <person name="Down T."/>
            <person name="Engstrom P."/>
            <person name="Fagiolini M."/>
            <person name="Faulkner G."/>
            <person name="Fletcher C.F."/>
            <person name="Fukushima T."/>
            <person name="Furuno M."/>
            <person name="Futaki S."/>
            <person name="Gariboldi M."/>
            <person name="Georgii-Hemming P."/>
            <person name="Gingeras T.R."/>
            <person name="Gojobori T."/>
            <person name="Green R.E."/>
            <person name="Gustincich S."/>
            <person name="Harbers M."/>
            <person name="Hayashi Y."/>
            <person name="Hensch T.K."/>
            <person name="Hirokawa N."/>
            <person name="Hill D."/>
            <person name="Huminiecki L."/>
            <person name="Iacono M."/>
            <person name="Ikeo K."/>
            <person name="Iwama A."/>
            <person name="Ishikawa T."/>
            <person name="Jakt M."/>
            <person name="Kanapin A."/>
            <person name="Katoh M."/>
            <person name="Kawasawa Y."/>
            <person name="Kelso J."/>
            <person name="Kitamura H."/>
            <person name="Kitano H."/>
            <person name="Kollias G."/>
            <person name="Krishnan S.P."/>
            <person name="Kruger A."/>
            <person name="Kummerfeld S.K."/>
            <person name="Kurochkin I.V."/>
            <person name="Lareau L.F."/>
            <person name="Lazarevic D."/>
            <person name="Lipovich L."/>
            <person name="Liu J."/>
            <person name="Liuni S."/>
            <person name="McWilliam S."/>
            <person name="Madan Babu M."/>
            <person name="Madera M."/>
            <person name="Marchionni L."/>
            <person name="Matsuda H."/>
            <person name="Matsuzawa S."/>
            <person name="Miki H."/>
            <person name="Mignone F."/>
            <person name="Miyake S."/>
            <person name="Morris K."/>
            <person name="Mottagui-Tabar S."/>
            <person name="Mulder N."/>
            <person name="Nakano N."/>
            <person name="Nakauchi H."/>
            <person name="Ng P."/>
            <person name="Nilsson R."/>
            <person name="Nishiguchi S."/>
            <person name="Nishikawa S."/>
            <person name="Nori F."/>
            <person name="Ohara O."/>
            <person name="Okazaki Y."/>
            <person name="Orlando V."/>
            <person name="Pang K.C."/>
            <person name="Pavan W.J."/>
            <person name="Pavesi G."/>
            <person name="Pesole G."/>
            <person name="Petrovsky N."/>
            <person name="Piazza S."/>
            <person name="Reed J."/>
            <person name="Reid J.F."/>
            <person name="Ring B.Z."/>
            <person name="Ringwald M."/>
            <person name="Rost B."/>
            <person name="Ruan Y."/>
            <person name="Salzberg S.L."/>
            <person name="Sandelin A."/>
            <person name="Schneider C."/>
            <person name="Schoenbach C."/>
            <person name="Sekiguchi K."/>
            <person name="Semple C.A."/>
            <person name="Seno S."/>
            <person name="Sessa L."/>
            <person name="Sheng Y."/>
            <person name="Shibata Y."/>
            <person name="Shimada H."/>
            <person name="Shimada K."/>
            <person name="Silva D."/>
            <person name="Sinclair B."/>
            <person name="Sperling S."/>
            <person name="Stupka E."/>
            <person name="Sugiura K."/>
            <person name="Sultana R."/>
            <person name="Takenaka Y."/>
            <person name="Taki K."/>
            <person name="Tammoja K."/>
            <person name="Tan S.L."/>
            <person name="Tang S."/>
            <person name="Taylor M.S."/>
            <person name="Tegner J."/>
            <person name="Teichmann S.A."/>
            <person name="Ueda H.R."/>
            <person name="van Nimwegen E."/>
            <person name="Verardo R."/>
            <person name="Wei C.L."/>
            <person name="Yagi K."/>
            <person name="Yamanishi H."/>
            <person name="Zabarovsky E."/>
            <person name="Zhu S."/>
            <person name="Zimmer A."/>
            <person name="Hide W."/>
            <person name="Bult C."/>
            <person name="Grimmond S.M."/>
            <person name="Teasdale R.D."/>
            <person name="Liu E.T."/>
            <person name="Brusic V."/>
            <person name="Quackenbush J."/>
            <person name="Wahlestedt C."/>
            <person name="Mattick J.S."/>
            <person name="Hume D.A."/>
            <person name="Kai C."/>
            <person name="Sasaki D."/>
            <person name="Tomaru Y."/>
            <person name="Fukuda S."/>
            <person name="Kanamori-Katayama M."/>
            <person name="Suzuki M."/>
            <person name="Aoki J."/>
            <person name="Arakawa T."/>
            <person name="Iida J."/>
            <person name="Imamura K."/>
            <person name="Itoh M."/>
            <person name="Kato T."/>
            <person name="Kawaji H."/>
            <person name="Kawagashira N."/>
            <person name="Kawashima T."/>
            <person name="Kojima M."/>
            <person name="Kondo S."/>
            <person name="Konno H."/>
            <person name="Nakano K."/>
            <person name="Ninomiya N."/>
            <person name="Nishio T."/>
            <person name="Okada M."/>
            <person name="Plessy C."/>
            <person name="Shibata K."/>
            <person name="Shiraki T."/>
            <person name="Suzuki S."/>
            <person name="Tagami M."/>
            <person name="Waki K."/>
            <person name="Watahiki A."/>
            <person name="Okamura-Oho Y."/>
            <person name="Suzuki H."/>
            <person name="Kawai J."/>
            <person name="Hayashizaki Y."/>
        </authorList>
    </citation>
    <scope>NUCLEOTIDE SEQUENCE [LARGE SCALE MRNA]</scope>
    <source>
        <strain>C57BL/6J</strain>
        <tissue>Testis</tissue>
    </source>
</reference>
<reference key="3">
    <citation type="journal article" date="2010" name="Cell">
        <title>A tissue-specific atlas of mouse protein phosphorylation and expression.</title>
        <authorList>
            <person name="Huttlin E.L."/>
            <person name="Jedrychowski M.P."/>
            <person name="Elias J.E."/>
            <person name="Goswami T."/>
            <person name="Rad R."/>
            <person name="Beausoleil S.A."/>
            <person name="Villen J."/>
            <person name="Haas W."/>
            <person name="Sowa M.E."/>
            <person name="Gygi S.P."/>
        </authorList>
    </citation>
    <scope>IDENTIFICATION BY MASS SPECTROMETRY [LARGE SCALE ANALYSIS]</scope>
    <source>
        <tissue>Brain</tissue>
    </source>
</reference>
<reference key="4">
    <citation type="journal article" date="2017" name="Nature">
        <title>Chemotherapy drugs induce pyroptosis through caspase-3 cleavage of a gasdermin.</title>
        <authorList>
            <person name="Wang Y."/>
            <person name="Gao W."/>
            <person name="Shi X."/>
            <person name="Ding J."/>
            <person name="Liu W."/>
            <person name="He H."/>
            <person name="Wang K."/>
            <person name="Shao F."/>
        </authorList>
    </citation>
    <scope>TISSUE SPECIFICITY</scope>
    <scope>DISRUPTION PHENOTYPE</scope>
</reference>
<reference key="5">
    <citation type="journal article" date="2017" name="Nat. Commun.">
        <title>Cleavage of DFNA5 by caspase-3 during apoptosis mediates progression to secondary necrotic/pyroptotic cell death.</title>
        <authorList>
            <person name="Rogers C."/>
            <person name="Fernandes-Alnemri T."/>
            <person name="Mayes L."/>
            <person name="Alnemri D."/>
            <person name="Cingolani G."/>
            <person name="Alnemri E.S."/>
        </authorList>
    </citation>
    <scope>FUNCTION</scope>
</reference>
<reference key="6">
    <citation type="journal article" date="2020" name="Nature">
        <title>Gasdermin E suppresses tumour growth by activating anti-tumour immunity.</title>
        <authorList>
            <person name="Zhang Z."/>
            <person name="Zhang Y."/>
            <person name="Xia S."/>
            <person name="Kong Q."/>
            <person name="Li S."/>
            <person name="Liu X."/>
            <person name="Junqueira C."/>
            <person name="Meza-Sosa K.F."/>
            <person name="Mok T.M.Y."/>
            <person name="Ansara J."/>
            <person name="Sengupta S."/>
            <person name="Yao Y."/>
            <person name="Wu H."/>
            <person name="Lieberman J."/>
        </authorList>
    </citation>
    <scope>FUNCTION</scope>
</reference>
<reference key="7">
    <citation type="journal article" date="2021" name="Cell Rep.">
        <title>Gasdermin E permits interleukin-1 beta release in distinct sublytic and pyroptotic phases.</title>
        <authorList>
            <person name="Zhou B."/>
            <person name="Abbott D.W."/>
        </authorList>
    </citation>
    <scope>FUNCTION</scope>
    <scope>ACTIVITY REGULATION</scope>
</reference>
<accession>Q9Z2D3</accession>
<feature type="chain" id="PRO_0000148179" description="Gasdermin-E">
    <location>
        <begin position="1"/>
        <end position="512"/>
    </location>
</feature>
<feature type="chain" id="PRO_0000442749" description="Gasdermin-E, N-terminal" evidence="1">
    <location>
        <begin position="1"/>
        <end position="270"/>
    </location>
</feature>
<feature type="chain" id="PRO_0000442750" description="Gasdermin-E, C-terminal" evidence="1">
    <location>
        <begin position="271"/>
        <end position="499"/>
    </location>
</feature>
<feature type="region of interest" description="Membrane targeting domain" evidence="1">
    <location>
        <begin position="1"/>
        <end position="56"/>
    </location>
</feature>
<feature type="site" description="Cleavage; by CASP3 or granzyme B" evidence="1">
    <location>
        <begin position="270"/>
        <end position="271"/>
    </location>
</feature>
<feature type="modified residue" description="S-(2-succinyl)cysteine" evidence="1">
    <location>
        <position position="45"/>
    </location>
</feature>
<feature type="modified residue" description="S-(2-succinyl)cysteine" evidence="1">
    <location>
        <position position="156"/>
    </location>
</feature>
<feature type="modified residue" description="S-(2-succinyl)cysteine" evidence="1">
    <location>
        <position position="168"/>
    </location>
</feature>
<feature type="modified residue" description="S-(2-succinyl)cysteine" evidence="1">
    <location>
        <position position="180"/>
    </location>
</feature>
<feature type="modified residue" description="S-(2-succinyl)cysteine" evidence="1">
    <location>
        <position position="235"/>
    </location>
</feature>
<feature type="modified residue" description="S-(2-succinyl)cysteine" evidence="1">
    <location>
        <position position="411"/>
    </location>
</feature>
<feature type="modified residue" description="S-(2-succinyl)cysteine" evidence="1">
    <location>
        <position position="420"/>
    </location>
</feature>
<feature type="cross-link" description="Glycyl lysine isopeptide (Lys-Gly) (interchain with G-Cter in ubiquitin)" evidence="1">
    <location>
        <position position="120"/>
    </location>
</feature>
<feature type="cross-link" description="Glycyl lysine isopeptide (Lys-Gly) (interchain with G-Cter in ubiquitin)" evidence="1">
    <location>
        <position position="189"/>
    </location>
</feature>
<proteinExistence type="evidence at protein level"/>
<organism>
    <name type="scientific">Mus musculus</name>
    <name type="common">Mouse</name>
    <dbReference type="NCBI Taxonomy" id="10090"/>
    <lineage>
        <taxon>Eukaryota</taxon>
        <taxon>Metazoa</taxon>
        <taxon>Chordata</taxon>
        <taxon>Craniata</taxon>
        <taxon>Vertebrata</taxon>
        <taxon>Euteleostomi</taxon>
        <taxon>Mammalia</taxon>
        <taxon>Eutheria</taxon>
        <taxon>Euarchontoglires</taxon>
        <taxon>Glires</taxon>
        <taxon>Rodentia</taxon>
        <taxon>Myomorpha</taxon>
        <taxon>Muroidea</taxon>
        <taxon>Muridae</taxon>
        <taxon>Murinae</taxon>
        <taxon>Mus</taxon>
        <taxon>Mus</taxon>
    </lineage>
</organism>
<dbReference type="EMBL" id="AF073309">
    <property type="protein sequence ID" value="AAC69325.1"/>
    <property type="molecule type" value="mRNA"/>
</dbReference>
<dbReference type="EMBL" id="AK016561">
    <property type="protein sequence ID" value="BAB30305.1"/>
    <property type="molecule type" value="mRNA"/>
</dbReference>
<dbReference type="CCDS" id="CCDS20130.1"/>
<dbReference type="RefSeq" id="NP_061239.1">
    <property type="nucleotide sequence ID" value="NM_018769.4"/>
</dbReference>
<dbReference type="RefSeq" id="XP_030111367.1">
    <property type="nucleotide sequence ID" value="XM_030255507.2"/>
</dbReference>
<dbReference type="FunCoup" id="Q9Z2D3">
    <property type="interactions" value="537"/>
</dbReference>
<dbReference type="STRING" id="10090.ENSMUSP00000031845"/>
<dbReference type="iPTMnet" id="Q9Z2D3"/>
<dbReference type="PhosphoSitePlus" id="Q9Z2D3"/>
<dbReference type="PaxDb" id="10090-ENSMUSP00000031845"/>
<dbReference type="ProteomicsDB" id="271468"/>
<dbReference type="Antibodypedia" id="1157">
    <property type="antibodies" value="220 antibodies from 30 providers"/>
</dbReference>
<dbReference type="DNASU" id="54722"/>
<dbReference type="Ensembl" id="ENSMUST00000031845.13">
    <property type="protein sequence ID" value="ENSMUSP00000031845.7"/>
    <property type="gene ID" value="ENSMUSG00000029821.16"/>
</dbReference>
<dbReference type="Ensembl" id="ENSMUST00000170142.8">
    <property type="protein sequence ID" value="ENSMUSP00000126759.2"/>
    <property type="gene ID" value="ENSMUSG00000029821.16"/>
</dbReference>
<dbReference type="GeneID" id="54722"/>
<dbReference type="KEGG" id="mmu:54722"/>
<dbReference type="UCSC" id="uc009bwx.1">
    <property type="organism name" value="mouse"/>
</dbReference>
<dbReference type="AGR" id="MGI:1889850"/>
<dbReference type="CTD" id="1687"/>
<dbReference type="MGI" id="MGI:1889850">
    <property type="gene designation" value="Gsdme"/>
</dbReference>
<dbReference type="VEuPathDB" id="HostDB:ENSMUSG00000029821"/>
<dbReference type="eggNOG" id="ENOG502QRAB">
    <property type="taxonomic scope" value="Eukaryota"/>
</dbReference>
<dbReference type="GeneTree" id="ENSGT00940000155880"/>
<dbReference type="InParanoid" id="Q9Z2D3"/>
<dbReference type="OMA" id="EMTNDCL"/>
<dbReference type="OrthoDB" id="8815334at2759"/>
<dbReference type="PhylomeDB" id="Q9Z2D3"/>
<dbReference type="TreeFam" id="TF352821"/>
<dbReference type="Reactome" id="R-MMU-111457">
    <property type="pathway name" value="Release of apoptotic factors from the mitochondria"/>
</dbReference>
<dbReference type="Reactome" id="R-MMU-5620971">
    <property type="pathway name" value="Pyroptosis"/>
</dbReference>
<dbReference type="Reactome" id="R-MMU-5686938">
    <property type="pathway name" value="Regulation of TLR by endogenous ligand"/>
</dbReference>
<dbReference type="BioGRID-ORCS" id="54722">
    <property type="hits" value="2 hits in 76 CRISPR screens"/>
</dbReference>
<dbReference type="ChiTaRS" id="Gsdme">
    <property type="organism name" value="mouse"/>
</dbReference>
<dbReference type="PRO" id="PR:Q9Z2D3"/>
<dbReference type="Proteomes" id="UP000000589">
    <property type="component" value="Chromosome 6"/>
</dbReference>
<dbReference type="RNAct" id="Q9Z2D3">
    <property type="molecule type" value="protein"/>
</dbReference>
<dbReference type="Bgee" id="ENSMUSG00000029821">
    <property type="expression patterns" value="Expressed in pineal body and 257 other cell types or tissues"/>
</dbReference>
<dbReference type="ExpressionAtlas" id="Q9Z2D3">
    <property type="expression patterns" value="baseline and differential"/>
</dbReference>
<dbReference type="GO" id="GO:0005737">
    <property type="term" value="C:cytoplasm"/>
    <property type="evidence" value="ECO:0000314"/>
    <property type="project" value="MGI"/>
</dbReference>
<dbReference type="GO" id="GO:0005829">
    <property type="term" value="C:cytosol"/>
    <property type="evidence" value="ECO:0007669"/>
    <property type="project" value="UniProtKB-SubCell"/>
</dbReference>
<dbReference type="GO" id="GO:0016020">
    <property type="term" value="C:membrane"/>
    <property type="evidence" value="ECO:0000250"/>
    <property type="project" value="UniProtKB"/>
</dbReference>
<dbReference type="GO" id="GO:0005886">
    <property type="term" value="C:plasma membrane"/>
    <property type="evidence" value="ECO:0000250"/>
    <property type="project" value="UniProtKB"/>
</dbReference>
<dbReference type="GO" id="GO:1901612">
    <property type="term" value="F:cardiolipin binding"/>
    <property type="evidence" value="ECO:0000314"/>
    <property type="project" value="UniProtKB"/>
</dbReference>
<dbReference type="GO" id="GO:0005546">
    <property type="term" value="F:phosphatidylinositol-4,5-bisphosphate binding"/>
    <property type="evidence" value="ECO:0000250"/>
    <property type="project" value="UniProtKB"/>
</dbReference>
<dbReference type="GO" id="GO:0022829">
    <property type="term" value="F:wide pore channel activity"/>
    <property type="evidence" value="ECO:0007669"/>
    <property type="project" value="Ensembl"/>
</dbReference>
<dbReference type="GO" id="GO:0071356">
    <property type="term" value="P:cellular response to tumor necrosis factor"/>
    <property type="evidence" value="ECO:0000250"/>
    <property type="project" value="UniProtKB"/>
</dbReference>
<dbReference type="GO" id="GO:0098586">
    <property type="term" value="P:cellular response to virus"/>
    <property type="evidence" value="ECO:0000315"/>
    <property type="project" value="UniProtKB"/>
</dbReference>
<dbReference type="GO" id="GO:0042491">
    <property type="term" value="P:inner ear auditory receptor cell differentiation"/>
    <property type="evidence" value="ECO:0000315"/>
    <property type="project" value="MGI"/>
</dbReference>
<dbReference type="GO" id="GO:0008285">
    <property type="term" value="P:negative regulation of cell population proliferation"/>
    <property type="evidence" value="ECO:0007669"/>
    <property type="project" value="Ensembl"/>
</dbReference>
<dbReference type="GO" id="GO:0002839">
    <property type="term" value="P:positive regulation of immune response to tumor cell"/>
    <property type="evidence" value="ECO:0007669"/>
    <property type="project" value="Ensembl"/>
</dbReference>
<dbReference type="GO" id="GO:2001244">
    <property type="term" value="P:positive regulation of intrinsic apoptotic signaling pathway"/>
    <property type="evidence" value="ECO:0000250"/>
    <property type="project" value="UniProtKB"/>
</dbReference>
<dbReference type="GO" id="GO:0043410">
    <property type="term" value="P:positive regulation of MAPK cascade"/>
    <property type="evidence" value="ECO:0000250"/>
    <property type="project" value="UniProtKB"/>
</dbReference>
<dbReference type="GO" id="GO:0012501">
    <property type="term" value="P:programmed cell death"/>
    <property type="evidence" value="ECO:0000250"/>
    <property type="project" value="UniProtKB"/>
</dbReference>
<dbReference type="GO" id="GO:0141201">
    <property type="term" value="P:pyroptotic cell death"/>
    <property type="evidence" value="ECO:0007669"/>
    <property type="project" value="Ensembl"/>
</dbReference>
<dbReference type="GO" id="GO:0070269">
    <property type="term" value="P:pyroptotic inflammatory response"/>
    <property type="evidence" value="ECO:0000315"/>
    <property type="project" value="UniProtKB"/>
</dbReference>
<dbReference type="GO" id="GO:0007605">
    <property type="term" value="P:sensory perception of sound"/>
    <property type="evidence" value="ECO:0000266"/>
    <property type="project" value="MGI"/>
</dbReference>
<dbReference type="InterPro" id="IPR040460">
    <property type="entry name" value="Gasdermin_pore"/>
</dbReference>
<dbReference type="InterPro" id="IPR041263">
    <property type="entry name" value="Gasdermin_PUB"/>
</dbReference>
<dbReference type="InterPro" id="IPR042377">
    <property type="entry name" value="GSDME"/>
</dbReference>
<dbReference type="PANTHER" id="PTHR15207:SF1">
    <property type="entry name" value="GASDERMIN-E"/>
    <property type="match status" value="1"/>
</dbReference>
<dbReference type="PANTHER" id="PTHR15207">
    <property type="entry name" value="NONSYNDROMIC HEARING IMPAIRMENT PROTEIN"/>
    <property type="match status" value="1"/>
</dbReference>
<dbReference type="Pfam" id="PF04598">
    <property type="entry name" value="Gasdermin"/>
    <property type="match status" value="1"/>
</dbReference>
<dbReference type="Pfam" id="PF17708">
    <property type="entry name" value="Gasdermin_C"/>
    <property type="match status" value="1"/>
</dbReference>
<name>GSDME_MOUSE</name>